<evidence type="ECO:0000250" key="1"/>
<evidence type="ECO:0000305" key="2"/>
<organism>
    <name type="scientific">Haemophilus influenzae (strain ATCC 51907 / DSM 11121 / KW20 / Rd)</name>
    <dbReference type="NCBI Taxonomy" id="71421"/>
    <lineage>
        <taxon>Bacteria</taxon>
        <taxon>Pseudomonadati</taxon>
        <taxon>Pseudomonadota</taxon>
        <taxon>Gammaproteobacteria</taxon>
        <taxon>Pasteurellales</taxon>
        <taxon>Pasteurellaceae</taxon>
        <taxon>Haemophilus</taxon>
    </lineage>
</organism>
<feature type="chain" id="PRO_0000103322" description="DNA polymerase III subunit alpha">
    <location>
        <begin position="1"/>
        <end position="1159"/>
    </location>
</feature>
<accession>P43743</accession>
<sequence>MSSQPRFIHLRTHTDFSMIDSIVKVKPLVKACAANEMVAMGLTDFTNFCGVVSFYSEMLSSGMKPIIGADVKVKSPLCGDEYFDLTLLAKNNEGYRNITLLLSKAYQRGYNDLPYIDQDWLIEHRDGVIILSGGTQGDVGKKLLKENVAEIESAVAFYQEFFADHFYLALSRTGRPNEERYIQAALKLAERCDLPLVATNDVMFLNTEDFEAHEIRVAIHDGYTLDDPKRPKCYTSQQYFRSEEDMCKLFADIPSALENTLLIAQRCSVTLRLGQYFLPQFPTGDLSTEDFLVQKSKEGLEERLVFLFPDEKVRLEKRPKYDERLQVELDVINQMGFPGYFLIVMEFIQWSKDNDIPVGPGRGSGAGSLVAYALKITDLDPLEFDLLFERFLNPERVSMPDFDVDFCMDGRDRVIEHVAETYGRGAVSQIITFGTMAAKAVIRDVGRVLGHPYGFVDRISKLIPPDPGMTLAKAFETEPQLQTAYDSDEEVRALINMARKLEGVTRNAGKHAGGVVISPTLITDFAPLYCDNEGLHPVTHFDKNDVEYAGLVKFDFLGLRTLTIIKWALDIINVRMVREGKPRVDIAAIPLDDPESFELLKRSETTAVFQLESRGMKDLIKRLQPDCFEDIIALVALFRPGPLQSGMVDNFIDRKHGREEVSYPDAEYQHASLKPILEPTYGIILYQEQVMQIAQVLAGYTLGGADLLRRAMGKKKPEEMAKQRLVFKEGAEKNGIDGELSMKIFDLVEKFAGYGFNKSHSAAYALVSYQTLWLKTHFPAEFMAAVMTSEMDNTDKIVGLYDECLRMGLKVTPPDINIGKHHFSVNEQGEIVYGIGAIKGVGEGPIEALVAARNEGGIFKDLFDLCARVDLKKINRRTFESLIMSGAFDKLGPHRAALSKNLEDALRASDQHAKDEAMGQTDMFGVLTETHEDVENAYANTPPYTEKQILDGERETLGLYLSSHPVSRYLKELSHYTSTRLKDLAPNRRGQISTVAGLVVASRIAMTKKGNRLGIATLDDRSGRLDLTLFGESLEQFGEKLQKDTVIVASGQVSFDDFSGGLKMTVRELMTLDEARSRYVKSLAISLSEHQITPSFIKQFKALLEPVSGGTLPINVYYQSPKGRALLRLGVQWSIIPTDEILTELVNLLGESAVELEFE</sequence>
<keyword id="KW-0963">Cytoplasm</keyword>
<keyword id="KW-0235">DNA replication</keyword>
<keyword id="KW-0239">DNA-directed DNA polymerase</keyword>
<keyword id="KW-0548">Nucleotidyltransferase</keyword>
<keyword id="KW-1185">Reference proteome</keyword>
<keyword id="KW-0808">Transferase</keyword>
<proteinExistence type="inferred from homology"/>
<gene>
    <name type="primary">dnaE</name>
    <name type="ordered locus">HI_0739</name>
</gene>
<protein>
    <recommendedName>
        <fullName>DNA polymerase III subunit alpha</fullName>
        <ecNumber>2.7.7.7</ecNumber>
    </recommendedName>
</protein>
<dbReference type="EC" id="2.7.7.7"/>
<dbReference type="EMBL" id="L42023">
    <property type="protein sequence ID" value="AAC22399.1"/>
    <property type="molecule type" value="Genomic_DNA"/>
</dbReference>
<dbReference type="PIR" id="H64089">
    <property type="entry name" value="H64089"/>
</dbReference>
<dbReference type="RefSeq" id="NP_438899.1">
    <property type="nucleotide sequence ID" value="NC_000907.1"/>
</dbReference>
<dbReference type="SMR" id="P43743"/>
<dbReference type="STRING" id="71421.HI_0739"/>
<dbReference type="EnsemblBacteria" id="AAC22399">
    <property type="protein sequence ID" value="AAC22399"/>
    <property type="gene ID" value="HI_0739"/>
</dbReference>
<dbReference type="KEGG" id="hin:HI_0739"/>
<dbReference type="PATRIC" id="fig|71421.8.peg.776"/>
<dbReference type="eggNOG" id="COG0587">
    <property type="taxonomic scope" value="Bacteria"/>
</dbReference>
<dbReference type="HOGENOM" id="CLU_001600_0_0_6"/>
<dbReference type="OrthoDB" id="9803237at2"/>
<dbReference type="PhylomeDB" id="P43743"/>
<dbReference type="BioCyc" id="HINF71421:G1GJ1-778-MONOMER"/>
<dbReference type="Proteomes" id="UP000000579">
    <property type="component" value="Chromosome"/>
</dbReference>
<dbReference type="GO" id="GO:0005737">
    <property type="term" value="C:cytoplasm"/>
    <property type="evidence" value="ECO:0007669"/>
    <property type="project" value="UniProtKB-SubCell"/>
</dbReference>
<dbReference type="GO" id="GO:0008408">
    <property type="term" value="F:3'-5' exonuclease activity"/>
    <property type="evidence" value="ECO:0007669"/>
    <property type="project" value="InterPro"/>
</dbReference>
<dbReference type="GO" id="GO:0003887">
    <property type="term" value="F:DNA-directed DNA polymerase activity"/>
    <property type="evidence" value="ECO:0000318"/>
    <property type="project" value="GO_Central"/>
</dbReference>
<dbReference type="GO" id="GO:0003676">
    <property type="term" value="F:nucleic acid binding"/>
    <property type="evidence" value="ECO:0007669"/>
    <property type="project" value="InterPro"/>
</dbReference>
<dbReference type="GO" id="GO:0006260">
    <property type="term" value="P:DNA replication"/>
    <property type="evidence" value="ECO:0007669"/>
    <property type="project" value="UniProtKB-KW"/>
</dbReference>
<dbReference type="CDD" id="cd04485">
    <property type="entry name" value="DnaE_OBF"/>
    <property type="match status" value="1"/>
</dbReference>
<dbReference type="CDD" id="cd07433">
    <property type="entry name" value="PHP_PolIIIA_DnaE1"/>
    <property type="match status" value="1"/>
</dbReference>
<dbReference type="FunFam" id="1.10.10.1600:FF:000001">
    <property type="entry name" value="DNA polymerase III subunit alpha"/>
    <property type="match status" value="1"/>
</dbReference>
<dbReference type="FunFam" id="1.10.150.870:FF:000001">
    <property type="entry name" value="DNA polymerase III subunit alpha"/>
    <property type="match status" value="1"/>
</dbReference>
<dbReference type="FunFam" id="2.40.50.140:FF:000106">
    <property type="entry name" value="DNA polymerase III subunit alpha"/>
    <property type="match status" value="1"/>
</dbReference>
<dbReference type="Gene3D" id="1.10.150.870">
    <property type="match status" value="1"/>
</dbReference>
<dbReference type="Gene3D" id="1.10.10.1600">
    <property type="entry name" value="Bacterial DNA polymerase III alpha subunit, thumb domain"/>
    <property type="match status" value="1"/>
</dbReference>
<dbReference type="Gene3D" id="3.20.20.140">
    <property type="entry name" value="Metal-dependent hydrolases"/>
    <property type="match status" value="1"/>
</dbReference>
<dbReference type="Gene3D" id="2.40.50.140">
    <property type="entry name" value="Nucleic acid-binding proteins"/>
    <property type="match status" value="1"/>
</dbReference>
<dbReference type="InterPro" id="IPR011708">
    <property type="entry name" value="DNA_pol3_alpha_NTPase_dom"/>
</dbReference>
<dbReference type="InterPro" id="IPR041931">
    <property type="entry name" value="DNA_pol3_alpha_thumb_dom"/>
</dbReference>
<dbReference type="InterPro" id="IPR040982">
    <property type="entry name" value="DNA_pol3_finger"/>
</dbReference>
<dbReference type="InterPro" id="IPR048472">
    <property type="entry name" value="DNA_pol_IIIA_C"/>
</dbReference>
<dbReference type="InterPro" id="IPR004805">
    <property type="entry name" value="DnaE2/DnaE/PolC"/>
</dbReference>
<dbReference type="InterPro" id="IPR029460">
    <property type="entry name" value="DNAPol_HHH"/>
</dbReference>
<dbReference type="InterPro" id="IPR012340">
    <property type="entry name" value="NA-bd_OB-fold"/>
</dbReference>
<dbReference type="InterPro" id="IPR004365">
    <property type="entry name" value="NA-bd_OB_tRNA"/>
</dbReference>
<dbReference type="InterPro" id="IPR004013">
    <property type="entry name" value="PHP_dom"/>
</dbReference>
<dbReference type="InterPro" id="IPR003141">
    <property type="entry name" value="Pol/His_phosphatase_N"/>
</dbReference>
<dbReference type="InterPro" id="IPR016195">
    <property type="entry name" value="Pol/histidinol_Pase-like"/>
</dbReference>
<dbReference type="InterPro" id="IPR049821">
    <property type="entry name" value="PolIIIA_DnaE1_PHP"/>
</dbReference>
<dbReference type="NCBIfam" id="TIGR00594">
    <property type="entry name" value="polc"/>
    <property type="match status" value="1"/>
</dbReference>
<dbReference type="NCBIfam" id="NF004226">
    <property type="entry name" value="PRK05673.1"/>
    <property type="match status" value="1"/>
</dbReference>
<dbReference type="PANTHER" id="PTHR32294">
    <property type="entry name" value="DNA POLYMERASE III SUBUNIT ALPHA"/>
    <property type="match status" value="1"/>
</dbReference>
<dbReference type="PANTHER" id="PTHR32294:SF0">
    <property type="entry name" value="DNA POLYMERASE III SUBUNIT ALPHA"/>
    <property type="match status" value="1"/>
</dbReference>
<dbReference type="Pfam" id="PF07733">
    <property type="entry name" value="DNA_pol3_alpha"/>
    <property type="match status" value="1"/>
</dbReference>
<dbReference type="Pfam" id="PF17657">
    <property type="entry name" value="DNA_pol3_finger"/>
    <property type="match status" value="1"/>
</dbReference>
<dbReference type="Pfam" id="PF20914">
    <property type="entry name" value="DNA_pol_IIIA_C"/>
    <property type="match status" value="1"/>
</dbReference>
<dbReference type="Pfam" id="PF14579">
    <property type="entry name" value="HHH_6"/>
    <property type="match status" value="1"/>
</dbReference>
<dbReference type="Pfam" id="PF02811">
    <property type="entry name" value="PHP"/>
    <property type="match status" value="1"/>
</dbReference>
<dbReference type="Pfam" id="PF01336">
    <property type="entry name" value="tRNA_anti-codon"/>
    <property type="match status" value="1"/>
</dbReference>
<dbReference type="SMART" id="SM00481">
    <property type="entry name" value="POLIIIAc"/>
    <property type="match status" value="1"/>
</dbReference>
<dbReference type="SUPFAM" id="SSF89550">
    <property type="entry name" value="PHP domain-like"/>
    <property type="match status" value="1"/>
</dbReference>
<name>DPO3A_HAEIN</name>
<comment type="function">
    <text evidence="1">DNA polymerase III is a complex, multichain enzyme responsible for most of the replicative synthesis in bacteria. This DNA polymerase also exhibits 3' to 5' exonuclease activity. The alpha chain is the DNA polymerase (By similarity).</text>
</comment>
<comment type="catalytic activity">
    <reaction>
        <text>DNA(n) + a 2'-deoxyribonucleoside 5'-triphosphate = DNA(n+1) + diphosphate</text>
        <dbReference type="Rhea" id="RHEA:22508"/>
        <dbReference type="Rhea" id="RHEA-COMP:17339"/>
        <dbReference type="Rhea" id="RHEA-COMP:17340"/>
        <dbReference type="ChEBI" id="CHEBI:33019"/>
        <dbReference type="ChEBI" id="CHEBI:61560"/>
        <dbReference type="ChEBI" id="CHEBI:173112"/>
        <dbReference type="EC" id="2.7.7.7"/>
    </reaction>
</comment>
<comment type="subunit">
    <text evidence="1">DNA polymerase III contains a core (composed of alpha, epsilon and theta chains) that associates with a tau subunit. This core dimerizes to form the PolIII' complex. PolIII' associates with the gamma complex (composed of gamma, delta, delta', psi and chi chains) and with the beta chain to form the complete DNA polymerase III complex (By similarity).</text>
</comment>
<comment type="subcellular location">
    <subcellularLocation>
        <location evidence="1">Cytoplasm</location>
    </subcellularLocation>
</comment>
<comment type="similarity">
    <text evidence="2">Belongs to the DNA polymerase type-C family. DnaE subfamily.</text>
</comment>
<reference key="1">
    <citation type="journal article" date="1995" name="Science">
        <title>Whole-genome random sequencing and assembly of Haemophilus influenzae Rd.</title>
        <authorList>
            <person name="Fleischmann R.D."/>
            <person name="Adams M.D."/>
            <person name="White O."/>
            <person name="Clayton R.A."/>
            <person name="Kirkness E.F."/>
            <person name="Kerlavage A.R."/>
            <person name="Bult C.J."/>
            <person name="Tomb J.-F."/>
            <person name="Dougherty B.A."/>
            <person name="Merrick J.M."/>
            <person name="McKenney K."/>
            <person name="Sutton G.G."/>
            <person name="FitzHugh W."/>
            <person name="Fields C.A."/>
            <person name="Gocayne J.D."/>
            <person name="Scott J.D."/>
            <person name="Shirley R."/>
            <person name="Liu L.-I."/>
            <person name="Glodek A."/>
            <person name="Kelley J.M."/>
            <person name="Weidman J.F."/>
            <person name="Phillips C.A."/>
            <person name="Spriggs T."/>
            <person name="Hedblom E."/>
            <person name="Cotton M.D."/>
            <person name="Utterback T.R."/>
            <person name="Hanna M.C."/>
            <person name="Nguyen D.T."/>
            <person name="Saudek D.M."/>
            <person name="Brandon R.C."/>
            <person name="Fine L.D."/>
            <person name="Fritchman J.L."/>
            <person name="Fuhrmann J.L."/>
            <person name="Geoghagen N.S.M."/>
            <person name="Gnehm C.L."/>
            <person name="McDonald L.A."/>
            <person name="Small K.V."/>
            <person name="Fraser C.M."/>
            <person name="Smith H.O."/>
            <person name="Venter J.C."/>
        </authorList>
    </citation>
    <scope>NUCLEOTIDE SEQUENCE [LARGE SCALE GENOMIC DNA]</scope>
    <source>
        <strain>ATCC 51907 / DSM 11121 / KW20 / Rd</strain>
    </source>
</reference>